<sequence length="2053" mass="220551">MFGGQFGSFGAKPAATASPFGAPSAAPTTSLFGSTAPSSGFGGFGSTAQTTQPTTGGFGGFGGFGGATTTQQPAASPFGGGGTGGSGLFGSSAQTTTQQPGASPFGGGFGTTTTTTTQQPGASPFGGTGGGLFGSSAQTTTQQQGASPFGGFGGATTTQPSLLSGATGGFGGFGGSTTSGTQLGGGGGATSGAFGGSSSPFGGSGGATTSSPFGGGGGSFGATTQKQYGTPIPYQQTTIEGNTFVSISAMPQYNDRSFEELRFEDITHRKDIVYKTGGGSGGGNSLFGSTPTTQPSSPFGAQTTTQTTGGLFGGQTTTSPFGGQTSATPGSSLFGSTQPTQQQTSGGLFGSVQPTQQQAGGGLFGSMPSTGGSSLFGSTQPTQQQTGGAQPTQSLFGGQTQTTTSPFGSQTSTPFGQPQQTNTGSGLFGAQQTQQTNTGGGLFGAQPTQQTSGGGLFGTQPTSGTGLFGTSPTAGGTGLFGTTQPTSQGTGLFGTTQPTTQGTGLFGTSPTSGTGLFGSTPTSGTGLFGSTPTSGTGLFGSAQPPQNQQSQTSLFGNTGTGATNTGTGLFGSAQPSSNPGGGLFGSAQPSTTTGGLFGSNQPTAQPTTSLFGNTTGSVGGLGATPNITSGLFGSNPAQTGGLFGSTQPTTQTSLFGNTGSTGGLGAQNGGGLFGNLSQPTATAGQGLSGGLFGNLSQPTATAGQGLSSGGLFGNTLLGQPSTQGLSSALPTLGLGLMGGQPQQTQQLPQGSLMLQQTQQPLQQQPLQQQQQPLQQSTIQLNNQINSASPYFPISSPAPFATFVKDLTSTSKVVSPPSYTQRSLSHHGYIPKSTTKLVPRRGPNNVDLGFSVIQNQNGLFPIDKFITKHSKSLNINTTNETEDTLRSLNTKSSSLFNNNNNNNNNNNNRNVNTNVNDYQNNGLPSSSLYNSNINQLSNNNNNNNNIYNNNNNNNINNNNNNNNISTQFNLRNNQSSSDNLNNDKSLSSSSSNKSQQQQQKEQKEEQPPKPIKEKEFINPNAPKLTRDGYQCVPSIKELSKKTDKELSSVQGFTISRDGCGSIYFPGSTNLVALDLDDIVDIEPREVSVYKDEETKPEIGYGLNRDAVVTLENCWPKNKNGEVVKEDGTILDKYENALKKVSAKSDCGFVSYSRSNGTWVFTVKHFSKYSAPDFDEDDQQMQQQTQQKQQQTQPSKVTFQQPSTKLTKPKFTANLDNFDSDSETSSGDENQDEMVPQKKTPFIKRVSNRESGLFDTPSVVPMSEKIETTPSKIARVSEPTSQSSRMSNNALKFSTFNPQQQQLQSSRFKSTGLSILSNPVKNLIQSDVNNEQSMFSNTTTTSTTRIQPLPSQQHLVQPIPTTISLNKNYFSKVRIDPQVYDRIVPKEESITNQYRMKNERLNHSTQDVSLFMRRSFRVGWAPGGKLISITKSSFKNLLIKKLPTDTKEDKKESIIKFLKNHHSHSSLVPENLKSIGWFSISNVQEQIESQLTLNVPSSQSVYYNRIWSLISNLWGNVLKGNGSKYINTNYSEDTIRKLNLNQWLKDVIAPLLRDEMDSLRKKTNSNYLEQIFSYLSAKQIKEASDLANENKDFRLATMMSQIWSSSESGKELILKQLTTYHSNGSDEFINEKRLEILHLIAGSVNKIYKNLNDWIRCFAVSFWFKYSLEYSIEDSVENFERSFNAHRSVYPLPPYLIKSTSTNSKQIEEQQHYYDICFLLLKLFAVNRGSSHFDKFKNIFYPENIGQDLLDYHLSWNLYTVLKSIPSLNKQPDLVNASNLHSSFALQLERLGLWQWSIYVLLHTPDQSNHVREEAVKSLIARAAPVITSEDRVFLTTKLHIPEIWIDEAKAWYSGYDCNNDIYDQIDALFKSYQYTKIHDIIFSNIGPNYIIQKRYHSLKDLLIRLEPHSSFISTWRYGGSIFLEFADICIQYKEILSQLSNTAEEIQRTKYYVNLKDITTRIVNILSDISKITQSSEIKNTSASYKQSLSFMSEALITKASLLRDLPESIVKLVSTNNLVSTLNSLPLTQDYRSKNLESLTDQIQDTLLNSIYQ</sequence>
<evidence type="ECO:0000250" key="1"/>
<evidence type="ECO:0000255" key="2">
    <source>
        <dbReference type="PROSITE-ProRule" id="PRU00765"/>
    </source>
</evidence>
<evidence type="ECO:0000256" key="3">
    <source>
        <dbReference type="SAM" id="MobiDB-lite"/>
    </source>
</evidence>
<evidence type="ECO:0000305" key="4"/>
<name>NUP98_DICDI</name>
<organism>
    <name type="scientific">Dictyostelium discoideum</name>
    <name type="common">Social amoeba</name>
    <dbReference type="NCBI Taxonomy" id="44689"/>
    <lineage>
        <taxon>Eukaryota</taxon>
        <taxon>Amoebozoa</taxon>
        <taxon>Evosea</taxon>
        <taxon>Eumycetozoa</taxon>
        <taxon>Dictyostelia</taxon>
        <taxon>Dictyosteliales</taxon>
        <taxon>Dictyosteliaceae</taxon>
        <taxon>Dictyostelium</taxon>
    </lineage>
</organism>
<protein>
    <recommendedName>
        <fullName>Nuclear pore complex protein Nup98-Nup96</fullName>
    </recommendedName>
    <component>
        <recommendedName>
            <fullName>Nuclear pore complex protein Nup98</fullName>
        </recommendedName>
        <alternativeName>
            <fullName>Nucleoporin Nup98</fullName>
        </alternativeName>
    </component>
    <component>
        <recommendedName>
            <fullName>Nuclear pore complex protein Nup96</fullName>
        </recommendedName>
        <alternativeName>
            <fullName>Nucleoporin Nup96</fullName>
        </alternativeName>
    </component>
</protein>
<feature type="chain" id="PRO_0000328562" description="Nuclear pore complex protein Nup98">
    <location>
        <begin position="1"/>
        <end position="1164"/>
    </location>
</feature>
<feature type="chain" id="PRO_0000328563" description="Nuclear pore complex protein Nup96">
    <location>
        <begin position="1165"/>
        <end position="2053"/>
    </location>
</feature>
<feature type="domain" description="Peptidase S59" evidence="2">
    <location>
        <begin position="1025"/>
        <end position="1164"/>
    </location>
</feature>
<feature type="region of interest" description="Disordered" evidence="3">
    <location>
        <begin position="43"/>
        <end position="222"/>
    </location>
</feature>
<feature type="region of interest" description="Disordered" evidence="3">
    <location>
        <begin position="274"/>
        <end position="617"/>
    </location>
</feature>
<feature type="region of interest" description="Disordered" evidence="3">
    <location>
        <begin position="638"/>
        <end position="662"/>
    </location>
</feature>
<feature type="region of interest" description="Disordered" evidence="3">
    <location>
        <begin position="890"/>
        <end position="1027"/>
    </location>
</feature>
<feature type="region of interest" description="Disordered" evidence="3">
    <location>
        <begin position="1170"/>
        <end position="1243"/>
    </location>
</feature>
<feature type="compositionally biased region" description="Low complexity" evidence="3">
    <location>
        <begin position="46"/>
        <end position="55"/>
    </location>
</feature>
<feature type="compositionally biased region" description="Gly residues" evidence="3">
    <location>
        <begin position="56"/>
        <end position="66"/>
    </location>
</feature>
<feature type="compositionally biased region" description="Low complexity" evidence="3">
    <location>
        <begin position="67"/>
        <end position="77"/>
    </location>
</feature>
<feature type="compositionally biased region" description="Gly residues" evidence="3">
    <location>
        <begin position="78"/>
        <end position="88"/>
    </location>
</feature>
<feature type="compositionally biased region" description="Low complexity" evidence="3">
    <location>
        <begin position="111"/>
        <end position="123"/>
    </location>
</feature>
<feature type="compositionally biased region" description="Gly residues" evidence="3">
    <location>
        <begin position="124"/>
        <end position="133"/>
    </location>
</feature>
<feature type="compositionally biased region" description="Low complexity" evidence="3">
    <location>
        <begin position="134"/>
        <end position="147"/>
    </location>
</feature>
<feature type="compositionally biased region" description="Gly residues" evidence="3">
    <location>
        <begin position="166"/>
        <end position="195"/>
    </location>
</feature>
<feature type="compositionally biased region" description="Low complexity" evidence="3">
    <location>
        <begin position="196"/>
        <end position="212"/>
    </location>
</feature>
<feature type="compositionally biased region" description="Gly residues" evidence="3">
    <location>
        <begin position="276"/>
        <end position="285"/>
    </location>
</feature>
<feature type="compositionally biased region" description="Polar residues" evidence="3">
    <location>
        <begin position="290"/>
        <end position="299"/>
    </location>
</feature>
<feature type="compositionally biased region" description="Low complexity" evidence="3">
    <location>
        <begin position="300"/>
        <end position="318"/>
    </location>
</feature>
<feature type="compositionally biased region" description="Polar residues" evidence="3">
    <location>
        <begin position="319"/>
        <end position="334"/>
    </location>
</feature>
<feature type="compositionally biased region" description="Low complexity" evidence="3">
    <location>
        <begin position="335"/>
        <end position="346"/>
    </location>
</feature>
<feature type="compositionally biased region" description="Polar residues" evidence="3">
    <location>
        <begin position="367"/>
        <end position="378"/>
    </location>
</feature>
<feature type="compositionally biased region" description="Low complexity" evidence="3">
    <location>
        <begin position="379"/>
        <end position="393"/>
    </location>
</feature>
<feature type="compositionally biased region" description="Polar residues" evidence="3">
    <location>
        <begin position="394"/>
        <end position="425"/>
    </location>
</feature>
<feature type="compositionally biased region" description="Polar residues" evidence="3">
    <location>
        <begin position="459"/>
        <end position="488"/>
    </location>
</feature>
<feature type="compositionally biased region" description="Low complexity" evidence="3">
    <location>
        <begin position="489"/>
        <end position="508"/>
    </location>
</feature>
<feature type="compositionally biased region" description="Polar residues" evidence="3">
    <location>
        <begin position="509"/>
        <end position="536"/>
    </location>
</feature>
<feature type="compositionally biased region" description="Polar residues" evidence="3">
    <location>
        <begin position="543"/>
        <end position="555"/>
    </location>
</feature>
<feature type="compositionally biased region" description="Low complexity" evidence="3">
    <location>
        <begin position="556"/>
        <end position="567"/>
    </location>
</feature>
<feature type="compositionally biased region" description="Polar residues" evidence="3">
    <location>
        <begin position="587"/>
        <end position="616"/>
    </location>
</feature>
<feature type="compositionally biased region" description="Polar residues" evidence="3">
    <location>
        <begin position="638"/>
        <end position="658"/>
    </location>
</feature>
<feature type="compositionally biased region" description="Low complexity" evidence="3">
    <location>
        <begin position="896"/>
        <end position="964"/>
    </location>
</feature>
<feature type="compositionally biased region" description="Low complexity" evidence="3">
    <location>
        <begin position="971"/>
        <end position="998"/>
    </location>
</feature>
<feature type="compositionally biased region" description="Basic and acidic residues" evidence="3">
    <location>
        <begin position="999"/>
        <end position="1015"/>
    </location>
</feature>
<feature type="compositionally biased region" description="Low complexity" evidence="3">
    <location>
        <begin position="1178"/>
        <end position="1191"/>
    </location>
</feature>
<feature type="compositionally biased region" description="Polar residues" evidence="3">
    <location>
        <begin position="1192"/>
        <end position="1204"/>
    </location>
</feature>
<proteinExistence type="inferred from homology"/>
<keyword id="KW-0068">Autocatalytic cleavage</keyword>
<keyword id="KW-0472">Membrane</keyword>
<keyword id="KW-0509">mRNA transport</keyword>
<keyword id="KW-0906">Nuclear pore complex</keyword>
<keyword id="KW-0539">Nucleus</keyword>
<keyword id="KW-0653">Protein transport</keyword>
<keyword id="KW-1185">Reference proteome</keyword>
<keyword id="KW-0677">Repeat</keyword>
<keyword id="KW-0811">Translocation</keyword>
<keyword id="KW-0813">Transport</keyword>
<accession>Q54EQ8</accession>
<reference key="1">
    <citation type="journal article" date="2005" name="Nature">
        <title>The genome of the social amoeba Dictyostelium discoideum.</title>
        <authorList>
            <person name="Eichinger L."/>
            <person name="Pachebat J.A."/>
            <person name="Gloeckner G."/>
            <person name="Rajandream M.A."/>
            <person name="Sucgang R."/>
            <person name="Berriman M."/>
            <person name="Song J."/>
            <person name="Olsen R."/>
            <person name="Szafranski K."/>
            <person name="Xu Q."/>
            <person name="Tunggal B."/>
            <person name="Kummerfeld S."/>
            <person name="Madera M."/>
            <person name="Konfortov B.A."/>
            <person name="Rivero F."/>
            <person name="Bankier A.T."/>
            <person name="Lehmann R."/>
            <person name="Hamlin N."/>
            <person name="Davies R."/>
            <person name="Gaudet P."/>
            <person name="Fey P."/>
            <person name="Pilcher K."/>
            <person name="Chen G."/>
            <person name="Saunders D."/>
            <person name="Sodergren E.J."/>
            <person name="Davis P."/>
            <person name="Kerhornou A."/>
            <person name="Nie X."/>
            <person name="Hall N."/>
            <person name="Anjard C."/>
            <person name="Hemphill L."/>
            <person name="Bason N."/>
            <person name="Farbrother P."/>
            <person name="Desany B."/>
            <person name="Just E."/>
            <person name="Morio T."/>
            <person name="Rost R."/>
            <person name="Churcher C.M."/>
            <person name="Cooper J."/>
            <person name="Haydock S."/>
            <person name="van Driessche N."/>
            <person name="Cronin A."/>
            <person name="Goodhead I."/>
            <person name="Muzny D.M."/>
            <person name="Mourier T."/>
            <person name="Pain A."/>
            <person name="Lu M."/>
            <person name="Harper D."/>
            <person name="Lindsay R."/>
            <person name="Hauser H."/>
            <person name="James K.D."/>
            <person name="Quiles M."/>
            <person name="Madan Babu M."/>
            <person name="Saito T."/>
            <person name="Buchrieser C."/>
            <person name="Wardroper A."/>
            <person name="Felder M."/>
            <person name="Thangavelu M."/>
            <person name="Johnson D."/>
            <person name="Knights A."/>
            <person name="Loulseged H."/>
            <person name="Mungall K.L."/>
            <person name="Oliver K."/>
            <person name="Price C."/>
            <person name="Quail M.A."/>
            <person name="Urushihara H."/>
            <person name="Hernandez J."/>
            <person name="Rabbinowitsch E."/>
            <person name="Steffen D."/>
            <person name="Sanders M."/>
            <person name="Ma J."/>
            <person name="Kohara Y."/>
            <person name="Sharp S."/>
            <person name="Simmonds M.N."/>
            <person name="Spiegler S."/>
            <person name="Tivey A."/>
            <person name="Sugano S."/>
            <person name="White B."/>
            <person name="Walker D."/>
            <person name="Woodward J.R."/>
            <person name="Winckler T."/>
            <person name="Tanaka Y."/>
            <person name="Shaulsky G."/>
            <person name="Schleicher M."/>
            <person name="Weinstock G.M."/>
            <person name="Rosenthal A."/>
            <person name="Cox E.C."/>
            <person name="Chisholm R.L."/>
            <person name="Gibbs R.A."/>
            <person name="Loomis W.F."/>
            <person name="Platzer M."/>
            <person name="Kay R.R."/>
            <person name="Williams J.G."/>
            <person name="Dear P.H."/>
            <person name="Noegel A.A."/>
            <person name="Barrell B.G."/>
            <person name="Kuspa A."/>
        </authorList>
    </citation>
    <scope>NUCLEOTIDE SEQUENCE [LARGE SCALE GENOMIC DNA]</scope>
    <source>
        <strain>AX4</strain>
    </source>
</reference>
<dbReference type="EMBL" id="AAFI02000177">
    <property type="protein sequence ID" value="EAL61679.1"/>
    <property type="molecule type" value="Genomic_DNA"/>
</dbReference>
<dbReference type="RefSeq" id="XP_635182.1">
    <property type="nucleotide sequence ID" value="XM_630090.1"/>
</dbReference>
<dbReference type="SMR" id="Q54EQ8"/>
<dbReference type="FunCoup" id="Q54EQ8">
    <property type="interactions" value="113"/>
</dbReference>
<dbReference type="STRING" id="44689.Q54EQ8"/>
<dbReference type="MEROPS" id="S59.A08"/>
<dbReference type="GlyGen" id="Q54EQ8">
    <property type="glycosylation" value="5 sites"/>
</dbReference>
<dbReference type="PaxDb" id="44689-DDB0235244"/>
<dbReference type="EnsemblProtists" id="EAL61679">
    <property type="protein sequence ID" value="EAL61679"/>
    <property type="gene ID" value="DDB_G0291390"/>
</dbReference>
<dbReference type="GeneID" id="8628128"/>
<dbReference type="KEGG" id="ddi:DDB_G0291390"/>
<dbReference type="dictyBase" id="DDB_G0291390">
    <property type="gene designation" value="nup98"/>
</dbReference>
<dbReference type="VEuPathDB" id="AmoebaDB:DDB_G0291390"/>
<dbReference type="eggNOG" id="KOG0845">
    <property type="taxonomic scope" value="Eukaryota"/>
</dbReference>
<dbReference type="HOGENOM" id="CLU_002330_1_0_1"/>
<dbReference type="InParanoid" id="Q54EQ8"/>
<dbReference type="OMA" id="PMGKGLN"/>
<dbReference type="PhylomeDB" id="Q54EQ8"/>
<dbReference type="CD-CODE" id="58AD3AE7">
    <property type="entry name" value="Nuclear pore complex"/>
</dbReference>
<dbReference type="PRO" id="PR:Q54EQ8"/>
<dbReference type="Proteomes" id="UP000002195">
    <property type="component" value="Chromosome 6"/>
</dbReference>
<dbReference type="GO" id="GO:0031965">
    <property type="term" value="C:nuclear membrane"/>
    <property type="evidence" value="ECO:0007669"/>
    <property type="project" value="UniProtKB-SubCell"/>
</dbReference>
<dbReference type="GO" id="GO:0005643">
    <property type="term" value="C:nuclear pore"/>
    <property type="evidence" value="ECO:0000250"/>
    <property type="project" value="dictyBase"/>
</dbReference>
<dbReference type="GO" id="GO:0044614">
    <property type="term" value="C:nuclear pore cytoplasmic filaments"/>
    <property type="evidence" value="ECO:0000318"/>
    <property type="project" value="GO_Central"/>
</dbReference>
<dbReference type="GO" id="GO:0008139">
    <property type="term" value="F:nuclear localization sequence binding"/>
    <property type="evidence" value="ECO:0000318"/>
    <property type="project" value="GO_Central"/>
</dbReference>
<dbReference type="GO" id="GO:0003723">
    <property type="term" value="F:RNA binding"/>
    <property type="evidence" value="ECO:0000318"/>
    <property type="project" value="GO_Central"/>
</dbReference>
<dbReference type="GO" id="GO:0017056">
    <property type="term" value="F:structural constituent of nuclear pore"/>
    <property type="evidence" value="ECO:0000250"/>
    <property type="project" value="dictyBase"/>
</dbReference>
<dbReference type="GO" id="GO:0051028">
    <property type="term" value="P:mRNA transport"/>
    <property type="evidence" value="ECO:0007669"/>
    <property type="project" value="UniProtKB-KW"/>
</dbReference>
<dbReference type="GO" id="GO:0051292">
    <property type="term" value="P:nuclear pore complex assembly"/>
    <property type="evidence" value="ECO:0000250"/>
    <property type="project" value="dictyBase"/>
</dbReference>
<dbReference type="GO" id="GO:0000973">
    <property type="term" value="P:post-transcriptional tethering of RNA polymerase II gene DNA at nuclear periphery"/>
    <property type="evidence" value="ECO:0000318"/>
    <property type="project" value="GO_Central"/>
</dbReference>
<dbReference type="GO" id="GO:0006606">
    <property type="term" value="P:protein import into nucleus"/>
    <property type="evidence" value="ECO:0000318"/>
    <property type="project" value="GO_Central"/>
</dbReference>
<dbReference type="GO" id="GO:0006405">
    <property type="term" value="P:RNA export from nucleus"/>
    <property type="evidence" value="ECO:0000318"/>
    <property type="project" value="GO_Central"/>
</dbReference>
<dbReference type="GO" id="GO:0034398">
    <property type="term" value="P:telomere tethering at nuclear periphery"/>
    <property type="evidence" value="ECO:0000318"/>
    <property type="project" value="GO_Central"/>
</dbReference>
<dbReference type="Gene3D" id="1.10.10.2360">
    <property type="match status" value="1"/>
</dbReference>
<dbReference type="Gene3D" id="1.25.40.690">
    <property type="match status" value="1"/>
</dbReference>
<dbReference type="Gene3D" id="3.30.1610.10">
    <property type="entry name" value="Peptidase S59, nucleoporin"/>
    <property type="match status" value="1"/>
</dbReference>
<dbReference type="InterPro" id="IPR025574">
    <property type="entry name" value="Nucleoporin_FG_rpt"/>
</dbReference>
<dbReference type="InterPro" id="IPR037665">
    <property type="entry name" value="Nucleoporin_S59-like"/>
</dbReference>
<dbReference type="InterPro" id="IPR007230">
    <property type="entry name" value="Nup98_auto-Pept-S59_dom"/>
</dbReference>
<dbReference type="InterPro" id="IPR036903">
    <property type="entry name" value="Nup98_auto-Pept-S59_dom_sf"/>
</dbReference>
<dbReference type="InterPro" id="IPR021967">
    <property type="entry name" value="Nup98_C"/>
</dbReference>
<dbReference type="PANTHER" id="PTHR23198:SF6">
    <property type="entry name" value="NUCLEAR PORE COMPLEX PROTEIN NUP98-NUP96"/>
    <property type="match status" value="1"/>
</dbReference>
<dbReference type="PANTHER" id="PTHR23198">
    <property type="entry name" value="NUCLEOPORIN"/>
    <property type="match status" value="1"/>
</dbReference>
<dbReference type="Pfam" id="PF04096">
    <property type="entry name" value="Nucleoporin2"/>
    <property type="match status" value="1"/>
</dbReference>
<dbReference type="Pfam" id="PF13634">
    <property type="entry name" value="Nucleoporin_FG"/>
    <property type="match status" value="5"/>
</dbReference>
<dbReference type="Pfam" id="PF12110">
    <property type="entry name" value="Nup96"/>
    <property type="match status" value="1"/>
</dbReference>
<dbReference type="SUPFAM" id="SSF82215">
    <property type="entry name" value="C-terminal autoproteolytic domain of nucleoporin nup98"/>
    <property type="match status" value="1"/>
</dbReference>
<dbReference type="PROSITE" id="PS51434">
    <property type="entry name" value="NUP_C"/>
    <property type="match status" value="1"/>
</dbReference>
<gene>
    <name type="primary">nup98</name>
    <name type="ORF">DDB_G0291390</name>
</gene>
<comment type="function">
    <text evidence="1">Nup98 and Nup96 play a role in the bidirectional transport across the nucleoporin complex (NPC). The repeat domain in Nup98 has a direct role in the transport (By similarity).</text>
</comment>
<comment type="subunit">
    <text evidence="1">Nup98 interacts directly with Nup96.</text>
</comment>
<comment type="subcellular location">
    <subcellularLocation>
        <location>Nucleus</location>
        <location>Nuclear pore complex</location>
    </subcellularLocation>
    <subcellularLocation>
        <location evidence="1">Nucleus membrane</location>
        <topology evidence="1">Peripheral membrane protein</topology>
        <orientation evidence="1">Nucleoplasmic side</orientation>
    </subcellularLocation>
    <text evidence="1">Nup96 is localized to the nucleoplasmic side of the nuclear pore complex, at or near the nucleoplasmic basket.</text>
</comment>
<comment type="domain">
    <text>Contains G-L-F-G repeats.</text>
</comment>
<comment type="PTM">
    <text evidence="1">Autoproteolytically cleaved to yield Nup98 and Nup96 or Nup98 only, respectively.</text>
</comment>
<comment type="similarity">
    <text evidence="4">Belongs to the nucleoporin GLFG family.</text>
</comment>